<reference key="1">
    <citation type="journal article" date="2001" name="Proc. Natl. Acad. Sci. U.S.A.">
        <title>Analysis of the chromosome sequence of the legume symbiont Sinorhizobium meliloti strain 1021.</title>
        <authorList>
            <person name="Capela D."/>
            <person name="Barloy-Hubler F."/>
            <person name="Gouzy J."/>
            <person name="Bothe G."/>
            <person name="Ampe F."/>
            <person name="Batut J."/>
            <person name="Boistard P."/>
            <person name="Becker A."/>
            <person name="Boutry M."/>
            <person name="Cadieu E."/>
            <person name="Dreano S."/>
            <person name="Gloux S."/>
            <person name="Godrie T."/>
            <person name="Goffeau A."/>
            <person name="Kahn D."/>
            <person name="Kiss E."/>
            <person name="Lelaure V."/>
            <person name="Masuy D."/>
            <person name="Pohl T."/>
            <person name="Portetelle D."/>
            <person name="Puehler A."/>
            <person name="Purnelle B."/>
            <person name="Ramsperger U."/>
            <person name="Renard C."/>
            <person name="Thebault P."/>
            <person name="Vandenbol M."/>
            <person name="Weidner S."/>
            <person name="Galibert F."/>
        </authorList>
    </citation>
    <scope>NUCLEOTIDE SEQUENCE [LARGE SCALE GENOMIC DNA]</scope>
    <source>
        <strain>1021</strain>
    </source>
</reference>
<reference key="2">
    <citation type="journal article" date="2001" name="Science">
        <title>The composite genome of the legume symbiont Sinorhizobium meliloti.</title>
        <authorList>
            <person name="Galibert F."/>
            <person name="Finan T.M."/>
            <person name="Long S.R."/>
            <person name="Puehler A."/>
            <person name="Abola P."/>
            <person name="Ampe F."/>
            <person name="Barloy-Hubler F."/>
            <person name="Barnett M.J."/>
            <person name="Becker A."/>
            <person name="Boistard P."/>
            <person name="Bothe G."/>
            <person name="Boutry M."/>
            <person name="Bowser L."/>
            <person name="Buhrmester J."/>
            <person name="Cadieu E."/>
            <person name="Capela D."/>
            <person name="Chain P."/>
            <person name="Cowie A."/>
            <person name="Davis R.W."/>
            <person name="Dreano S."/>
            <person name="Federspiel N.A."/>
            <person name="Fisher R.F."/>
            <person name="Gloux S."/>
            <person name="Godrie T."/>
            <person name="Goffeau A."/>
            <person name="Golding B."/>
            <person name="Gouzy J."/>
            <person name="Gurjal M."/>
            <person name="Hernandez-Lucas I."/>
            <person name="Hong A."/>
            <person name="Huizar L."/>
            <person name="Hyman R.W."/>
            <person name="Jones T."/>
            <person name="Kahn D."/>
            <person name="Kahn M.L."/>
            <person name="Kalman S."/>
            <person name="Keating D.H."/>
            <person name="Kiss E."/>
            <person name="Komp C."/>
            <person name="Lelaure V."/>
            <person name="Masuy D."/>
            <person name="Palm C."/>
            <person name="Peck M.C."/>
            <person name="Pohl T.M."/>
            <person name="Portetelle D."/>
            <person name="Purnelle B."/>
            <person name="Ramsperger U."/>
            <person name="Surzycki R."/>
            <person name="Thebault P."/>
            <person name="Vandenbol M."/>
            <person name="Vorhoelter F.J."/>
            <person name="Weidner S."/>
            <person name="Wells D.H."/>
            <person name="Wong K."/>
            <person name="Yeh K.-C."/>
            <person name="Batut J."/>
        </authorList>
    </citation>
    <scope>NUCLEOTIDE SEQUENCE [LARGE SCALE GENOMIC DNA]</scope>
    <source>
        <strain>1021</strain>
    </source>
</reference>
<keyword id="KW-1185">Reference proteome</keyword>
<keyword id="KW-0687">Ribonucleoprotein</keyword>
<keyword id="KW-0689">Ribosomal protein</keyword>
<keyword id="KW-0694">RNA-binding</keyword>
<keyword id="KW-0699">rRNA-binding</keyword>
<gene>
    <name evidence="1" type="primary">rplD</name>
    <name type="ordered locus">R01357</name>
    <name type="ORF">SMc01308</name>
</gene>
<proteinExistence type="inferred from homology"/>
<protein>
    <recommendedName>
        <fullName evidence="1">Large ribosomal subunit protein uL4</fullName>
    </recommendedName>
    <alternativeName>
        <fullName evidence="3">50S ribosomal protein L4</fullName>
    </alternativeName>
</protein>
<feature type="chain" id="PRO_0000129264" description="Large ribosomal subunit protein uL4">
    <location>
        <begin position="1"/>
        <end position="206"/>
    </location>
</feature>
<feature type="region of interest" description="Disordered" evidence="2">
    <location>
        <begin position="63"/>
        <end position="93"/>
    </location>
</feature>
<feature type="compositionally biased region" description="Basic residues" evidence="2">
    <location>
        <begin position="64"/>
        <end position="77"/>
    </location>
</feature>
<dbReference type="EMBL" id="AL591688">
    <property type="protein sequence ID" value="CAC45936.1"/>
    <property type="molecule type" value="Genomic_DNA"/>
</dbReference>
<dbReference type="RefSeq" id="NP_385463.1">
    <property type="nucleotide sequence ID" value="NC_003047.1"/>
</dbReference>
<dbReference type="RefSeq" id="WP_003536623.1">
    <property type="nucleotide sequence ID" value="NC_003047.1"/>
</dbReference>
<dbReference type="SMR" id="Q92QG9"/>
<dbReference type="EnsemblBacteria" id="CAC45936">
    <property type="protein sequence ID" value="CAC45936"/>
    <property type="gene ID" value="SMc01308"/>
</dbReference>
<dbReference type="GeneID" id="89575681"/>
<dbReference type="KEGG" id="sme:SMc01308"/>
<dbReference type="PATRIC" id="fig|266834.11.peg.2773"/>
<dbReference type="eggNOG" id="COG0088">
    <property type="taxonomic scope" value="Bacteria"/>
</dbReference>
<dbReference type="HOGENOM" id="CLU_041575_5_1_5"/>
<dbReference type="OrthoDB" id="9803201at2"/>
<dbReference type="Proteomes" id="UP000001976">
    <property type="component" value="Chromosome"/>
</dbReference>
<dbReference type="GO" id="GO:1990904">
    <property type="term" value="C:ribonucleoprotein complex"/>
    <property type="evidence" value="ECO:0007669"/>
    <property type="project" value="UniProtKB-KW"/>
</dbReference>
<dbReference type="GO" id="GO:0005840">
    <property type="term" value="C:ribosome"/>
    <property type="evidence" value="ECO:0007669"/>
    <property type="project" value="UniProtKB-KW"/>
</dbReference>
<dbReference type="GO" id="GO:0019843">
    <property type="term" value="F:rRNA binding"/>
    <property type="evidence" value="ECO:0007669"/>
    <property type="project" value="UniProtKB-UniRule"/>
</dbReference>
<dbReference type="GO" id="GO:0003735">
    <property type="term" value="F:structural constituent of ribosome"/>
    <property type="evidence" value="ECO:0007669"/>
    <property type="project" value="InterPro"/>
</dbReference>
<dbReference type="GO" id="GO:0006412">
    <property type="term" value="P:translation"/>
    <property type="evidence" value="ECO:0007669"/>
    <property type="project" value="UniProtKB-UniRule"/>
</dbReference>
<dbReference type="Gene3D" id="3.40.1370.10">
    <property type="match status" value="1"/>
</dbReference>
<dbReference type="HAMAP" id="MF_01328_B">
    <property type="entry name" value="Ribosomal_uL4_B"/>
    <property type="match status" value="1"/>
</dbReference>
<dbReference type="InterPro" id="IPR002136">
    <property type="entry name" value="Ribosomal_uL4"/>
</dbReference>
<dbReference type="InterPro" id="IPR013005">
    <property type="entry name" value="Ribosomal_uL4-like"/>
</dbReference>
<dbReference type="InterPro" id="IPR023574">
    <property type="entry name" value="Ribosomal_uL4_dom_sf"/>
</dbReference>
<dbReference type="NCBIfam" id="TIGR03953">
    <property type="entry name" value="rplD_bact"/>
    <property type="match status" value="1"/>
</dbReference>
<dbReference type="PANTHER" id="PTHR10746">
    <property type="entry name" value="50S RIBOSOMAL PROTEIN L4"/>
    <property type="match status" value="1"/>
</dbReference>
<dbReference type="PANTHER" id="PTHR10746:SF6">
    <property type="entry name" value="LARGE RIBOSOMAL SUBUNIT PROTEIN UL4M"/>
    <property type="match status" value="1"/>
</dbReference>
<dbReference type="Pfam" id="PF00573">
    <property type="entry name" value="Ribosomal_L4"/>
    <property type="match status" value="1"/>
</dbReference>
<dbReference type="SUPFAM" id="SSF52166">
    <property type="entry name" value="Ribosomal protein L4"/>
    <property type="match status" value="1"/>
</dbReference>
<organism>
    <name type="scientific">Rhizobium meliloti (strain 1021)</name>
    <name type="common">Ensifer meliloti</name>
    <name type="synonym">Sinorhizobium meliloti</name>
    <dbReference type="NCBI Taxonomy" id="266834"/>
    <lineage>
        <taxon>Bacteria</taxon>
        <taxon>Pseudomonadati</taxon>
        <taxon>Pseudomonadota</taxon>
        <taxon>Alphaproteobacteria</taxon>
        <taxon>Hyphomicrobiales</taxon>
        <taxon>Rhizobiaceae</taxon>
        <taxon>Sinorhizobium/Ensifer group</taxon>
        <taxon>Sinorhizobium</taxon>
    </lineage>
</organism>
<accession>Q92QG9</accession>
<sequence length="206" mass="22244">MDLTVKTLEGKDAGKVSLSDAIFGLEPREDIIARVVRWQLAKRQQGTHKSKGRAEVSRTGAKMYKQKGTGRARHHSARAPQFRGGGKAHGPVVRSHAHDLPKKIRALGLRHALSAKLKAEDIIVIDDLVANEAKTKALAGAFASLGLTNALIIGGAEIEGNFKLAAQNIPNVDVLPVQGINVYDILRRGKLVLSKAAVEALEERFK</sequence>
<name>RL4_RHIME</name>
<comment type="function">
    <text evidence="1">One of the primary rRNA binding proteins, this protein initially binds near the 5'-end of the 23S rRNA. It is important during the early stages of 50S assembly. It makes multiple contacts with different domains of the 23S rRNA in the assembled 50S subunit and ribosome.</text>
</comment>
<comment type="function">
    <text evidence="1">Forms part of the polypeptide exit tunnel.</text>
</comment>
<comment type="subunit">
    <text evidence="1">Part of the 50S ribosomal subunit.</text>
</comment>
<comment type="similarity">
    <text evidence="1">Belongs to the universal ribosomal protein uL4 family.</text>
</comment>
<evidence type="ECO:0000255" key="1">
    <source>
        <dbReference type="HAMAP-Rule" id="MF_01328"/>
    </source>
</evidence>
<evidence type="ECO:0000256" key="2">
    <source>
        <dbReference type="SAM" id="MobiDB-lite"/>
    </source>
</evidence>
<evidence type="ECO:0000305" key="3"/>